<feature type="chain" id="PRO_1000052431" description="Large ribosomal subunit protein uL4">
    <location>
        <begin position="1"/>
        <end position="207"/>
    </location>
</feature>
<feature type="region of interest" description="Disordered" evidence="2">
    <location>
        <begin position="49"/>
        <end position="75"/>
    </location>
</feature>
<evidence type="ECO:0000255" key="1">
    <source>
        <dbReference type="HAMAP-Rule" id="MF_01328"/>
    </source>
</evidence>
<evidence type="ECO:0000256" key="2">
    <source>
        <dbReference type="SAM" id="MobiDB-lite"/>
    </source>
</evidence>
<evidence type="ECO:0000305" key="3"/>
<dbReference type="EMBL" id="CP000414">
    <property type="protein sequence ID" value="ABJ61328.1"/>
    <property type="molecule type" value="Genomic_DNA"/>
</dbReference>
<dbReference type="RefSeq" id="WP_011679134.1">
    <property type="nucleotide sequence ID" value="NC_008531.1"/>
</dbReference>
<dbReference type="SMR" id="Q03ZP4"/>
<dbReference type="EnsemblBacteria" id="ABJ61328">
    <property type="protein sequence ID" value="ABJ61328"/>
    <property type="gene ID" value="LEUM_0197"/>
</dbReference>
<dbReference type="GeneID" id="29576319"/>
<dbReference type="KEGG" id="lme:LEUM_0197"/>
<dbReference type="eggNOG" id="COG0088">
    <property type="taxonomic scope" value="Bacteria"/>
</dbReference>
<dbReference type="HOGENOM" id="CLU_041575_5_2_9"/>
<dbReference type="Proteomes" id="UP000000362">
    <property type="component" value="Chromosome"/>
</dbReference>
<dbReference type="GO" id="GO:1990904">
    <property type="term" value="C:ribonucleoprotein complex"/>
    <property type="evidence" value="ECO:0007669"/>
    <property type="project" value="UniProtKB-KW"/>
</dbReference>
<dbReference type="GO" id="GO:0005840">
    <property type="term" value="C:ribosome"/>
    <property type="evidence" value="ECO:0007669"/>
    <property type="project" value="UniProtKB-KW"/>
</dbReference>
<dbReference type="GO" id="GO:0019843">
    <property type="term" value="F:rRNA binding"/>
    <property type="evidence" value="ECO:0007669"/>
    <property type="project" value="UniProtKB-UniRule"/>
</dbReference>
<dbReference type="GO" id="GO:0003735">
    <property type="term" value="F:structural constituent of ribosome"/>
    <property type="evidence" value="ECO:0007669"/>
    <property type="project" value="InterPro"/>
</dbReference>
<dbReference type="GO" id="GO:0006412">
    <property type="term" value="P:translation"/>
    <property type="evidence" value="ECO:0007669"/>
    <property type="project" value="UniProtKB-UniRule"/>
</dbReference>
<dbReference type="Gene3D" id="3.40.1370.10">
    <property type="match status" value="1"/>
</dbReference>
<dbReference type="HAMAP" id="MF_01328_B">
    <property type="entry name" value="Ribosomal_uL4_B"/>
    <property type="match status" value="1"/>
</dbReference>
<dbReference type="InterPro" id="IPR002136">
    <property type="entry name" value="Ribosomal_uL4"/>
</dbReference>
<dbReference type="InterPro" id="IPR013005">
    <property type="entry name" value="Ribosomal_uL4-like"/>
</dbReference>
<dbReference type="InterPro" id="IPR023574">
    <property type="entry name" value="Ribosomal_uL4_dom_sf"/>
</dbReference>
<dbReference type="NCBIfam" id="TIGR03953">
    <property type="entry name" value="rplD_bact"/>
    <property type="match status" value="1"/>
</dbReference>
<dbReference type="PANTHER" id="PTHR10746">
    <property type="entry name" value="50S RIBOSOMAL PROTEIN L4"/>
    <property type="match status" value="1"/>
</dbReference>
<dbReference type="PANTHER" id="PTHR10746:SF6">
    <property type="entry name" value="LARGE RIBOSOMAL SUBUNIT PROTEIN UL4M"/>
    <property type="match status" value="1"/>
</dbReference>
<dbReference type="Pfam" id="PF00573">
    <property type="entry name" value="Ribosomal_L4"/>
    <property type="match status" value="1"/>
</dbReference>
<dbReference type="SUPFAM" id="SSF52166">
    <property type="entry name" value="Ribosomal protein L4"/>
    <property type="match status" value="1"/>
</dbReference>
<gene>
    <name evidence="1" type="primary">rplD</name>
    <name type="ordered locus">LEUM_0197</name>
</gene>
<protein>
    <recommendedName>
        <fullName evidence="1">Large ribosomal subunit protein uL4</fullName>
    </recommendedName>
    <alternativeName>
        <fullName evidence="3">50S ribosomal protein L4</fullName>
    </alternativeName>
</protein>
<comment type="function">
    <text evidence="1">One of the primary rRNA binding proteins, this protein initially binds near the 5'-end of the 23S rRNA. It is important during the early stages of 50S assembly. It makes multiple contacts with different domains of the 23S rRNA in the assembled 50S subunit and ribosome.</text>
</comment>
<comment type="function">
    <text evidence="1">Forms part of the polypeptide exit tunnel.</text>
</comment>
<comment type="subunit">
    <text evidence="1">Part of the 50S ribosomal subunit.</text>
</comment>
<comment type="similarity">
    <text evidence="1">Belongs to the universal ribosomal protein uL4 family.</text>
</comment>
<keyword id="KW-1185">Reference proteome</keyword>
<keyword id="KW-0687">Ribonucleoprotein</keyword>
<keyword id="KW-0689">Ribosomal protein</keyword>
<keyword id="KW-0694">RNA-binding</keyword>
<keyword id="KW-0699">rRNA-binding</keyword>
<organism>
    <name type="scientific">Leuconostoc mesenteroides subsp. mesenteroides (strain ATCC 8293 / DSM 20343 / BCRC 11652 / CCM 1803 / JCM 6124 / NCDO 523 / NBRC 100496 / NCIMB 8023 / NCTC 12954 / NRRL B-1118 / 37Y)</name>
    <dbReference type="NCBI Taxonomy" id="203120"/>
    <lineage>
        <taxon>Bacteria</taxon>
        <taxon>Bacillati</taxon>
        <taxon>Bacillota</taxon>
        <taxon>Bacilli</taxon>
        <taxon>Lactobacillales</taxon>
        <taxon>Lactobacillaceae</taxon>
        <taxon>Leuconostoc</taxon>
    </lineage>
</organism>
<proteinExistence type="inferred from homology"/>
<name>RL4_LEUMM</name>
<reference key="1">
    <citation type="journal article" date="2006" name="Proc. Natl. Acad. Sci. U.S.A.">
        <title>Comparative genomics of the lactic acid bacteria.</title>
        <authorList>
            <person name="Makarova K.S."/>
            <person name="Slesarev A."/>
            <person name="Wolf Y.I."/>
            <person name="Sorokin A."/>
            <person name="Mirkin B."/>
            <person name="Koonin E.V."/>
            <person name="Pavlov A."/>
            <person name="Pavlova N."/>
            <person name="Karamychev V."/>
            <person name="Polouchine N."/>
            <person name="Shakhova V."/>
            <person name="Grigoriev I."/>
            <person name="Lou Y."/>
            <person name="Rohksar D."/>
            <person name="Lucas S."/>
            <person name="Huang K."/>
            <person name="Goodstein D.M."/>
            <person name="Hawkins T."/>
            <person name="Plengvidhya V."/>
            <person name="Welker D."/>
            <person name="Hughes J."/>
            <person name="Goh Y."/>
            <person name="Benson A."/>
            <person name="Baldwin K."/>
            <person name="Lee J.-H."/>
            <person name="Diaz-Muniz I."/>
            <person name="Dosti B."/>
            <person name="Smeianov V."/>
            <person name="Wechter W."/>
            <person name="Barabote R."/>
            <person name="Lorca G."/>
            <person name="Altermann E."/>
            <person name="Barrangou R."/>
            <person name="Ganesan B."/>
            <person name="Xie Y."/>
            <person name="Rawsthorne H."/>
            <person name="Tamir D."/>
            <person name="Parker C."/>
            <person name="Breidt F."/>
            <person name="Broadbent J.R."/>
            <person name="Hutkins R."/>
            <person name="O'Sullivan D."/>
            <person name="Steele J."/>
            <person name="Unlu G."/>
            <person name="Saier M.H. Jr."/>
            <person name="Klaenhammer T."/>
            <person name="Richardson P."/>
            <person name="Kozyavkin S."/>
            <person name="Weimer B.C."/>
            <person name="Mills D.A."/>
        </authorList>
    </citation>
    <scope>NUCLEOTIDE SEQUENCE [LARGE SCALE GENOMIC DNA]</scope>
    <source>
        <strain>ATCC 8293 / DSM 20343 / BCRC 11652 / CCM 1803 / JCM 6124 / NCDO 523 / NBRC 100496 / NCIMB 8023 / NCTC 12954 / NRRL B-1118 / 37Y</strain>
    </source>
</reference>
<sequence length="207" mass="22254">MTKVAVLKQDGSQAAEIELNDAVFAIEPNNAVITDAVLMQRASLRQGTHAVKNRSAVSGGGRKPWKQKGTGRARAGSIREPQFRGGGIVFGPSPRSYAYRINRKAYQLALKSVLSQKVADNKLVVVDALSFEAPKTQDFKKVLANLSADKKTLVVVDEDNENAILSARNLANVQVMTTKGINVLDVVNADKLVIVQSSIEEIQGGLA</sequence>
<accession>Q03ZP4</accession>